<protein>
    <recommendedName>
        <fullName evidence="1">Phosphoenolpyruvate carboxylase</fullName>
        <shortName evidence="1">PEPC</shortName>
        <shortName evidence="1">PEPCase</shortName>
        <ecNumber evidence="1">4.1.1.31</ecNumber>
    </recommendedName>
</protein>
<accession>Q03VI7</accession>
<name>CAPPA_LEUMM</name>
<comment type="function">
    <text evidence="1">Catalyzes the irreversible beta-carboxylation of phosphoenolpyruvate (PEP) to form oxaloacetate (OAA), a four-carbon dicarboxylic acid source for the tricarboxylic acid cycle.</text>
</comment>
<comment type="catalytic activity">
    <reaction evidence="1">
        <text>oxaloacetate + phosphate = phosphoenolpyruvate + hydrogencarbonate</text>
        <dbReference type="Rhea" id="RHEA:28370"/>
        <dbReference type="ChEBI" id="CHEBI:16452"/>
        <dbReference type="ChEBI" id="CHEBI:17544"/>
        <dbReference type="ChEBI" id="CHEBI:43474"/>
        <dbReference type="ChEBI" id="CHEBI:58702"/>
        <dbReference type="EC" id="4.1.1.31"/>
    </reaction>
</comment>
<comment type="cofactor">
    <cofactor evidence="1">
        <name>Mg(2+)</name>
        <dbReference type="ChEBI" id="CHEBI:18420"/>
    </cofactor>
</comment>
<comment type="subunit">
    <text evidence="1">Homotetramer.</text>
</comment>
<comment type="similarity">
    <text evidence="1">Belongs to the PEPCase type 2 family.</text>
</comment>
<keyword id="KW-0120">Carbon dioxide fixation</keyword>
<keyword id="KW-0456">Lyase</keyword>
<keyword id="KW-0460">Magnesium</keyword>
<keyword id="KW-1185">Reference proteome</keyword>
<gene>
    <name evidence="1" type="primary">ppcA</name>
    <name type="ordered locus">LEUM_1694</name>
</gene>
<reference key="1">
    <citation type="journal article" date="2006" name="Proc. Natl. Acad. Sci. U.S.A.">
        <title>Comparative genomics of the lactic acid bacteria.</title>
        <authorList>
            <person name="Makarova K.S."/>
            <person name="Slesarev A."/>
            <person name="Wolf Y.I."/>
            <person name="Sorokin A."/>
            <person name="Mirkin B."/>
            <person name="Koonin E.V."/>
            <person name="Pavlov A."/>
            <person name="Pavlova N."/>
            <person name="Karamychev V."/>
            <person name="Polouchine N."/>
            <person name="Shakhova V."/>
            <person name="Grigoriev I."/>
            <person name="Lou Y."/>
            <person name="Rohksar D."/>
            <person name="Lucas S."/>
            <person name="Huang K."/>
            <person name="Goodstein D.M."/>
            <person name="Hawkins T."/>
            <person name="Plengvidhya V."/>
            <person name="Welker D."/>
            <person name="Hughes J."/>
            <person name="Goh Y."/>
            <person name="Benson A."/>
            <person name="Baldwin K."/>
            <person name="Lee J.-H."/>
            <person name="Diaz-Muniz I."/>
            <person name="Dosti B."/>
            <person name="Smeianov V."/>
            <person name="Wechter W."/>
            <person name="Barabote R."/>
            <person name="Lorca G."/>
            <person name="Altermann E."/>
            <person name="Barrangou R."/>
            <person name="Ganesan B."/>
            <person name="Xie Y."/>
            <person name="Rawsthorne H."/>
            <person name="Tamir D."/>
            <person name="Parker C."/>
            <person name="Breidt F."/>
            <person name="Broadbent J.R."/>
            <person name="Hutkins R."/>
            <person name="O'Sullivan D."/>
            <person name="Steele J."/>
            <person name="Unlu G."/>
            <person name="Saier M.H. Jr."/>
            <person name="Klaenhammer T."/>
            <person name="Richardson P."/>
            <person name="Kozyavkin S."/>
            <person name="Weimer B.C."/>
            <person name="Mills D.A."/>
        </authorList>
    </citation>
    <scope>NUCLEOTIDE SEQUENCE [LARGE SCALE GENOMIC DNA]</scope>
    <source>
        <strain>ATCC 8293 / DSM 20343 / BCRC 11652 / CCM 1803 / JCM 6124 / NCDO 523 / NBRC 100496 / NCIMB 8023 / NCTC 12954 / NRRL B-1118 / 37Y</strain>
    </source>
</reference>
<evidence type="ECO:0000255" key="1">
    <source>
        <dbReference type="HAMAP-Rule" id="MF_01904"/>
    </source>
</evidence>
<evidence type="ECO:0000256" key="2">
    <source>
        <dbReference type="SAM" id="MobiDB-lite"/>
    </source>
</evidence>
<feature type="chain" id="PRO_0000309596" description="Phosphoenolpyruvate carboxylase">
    <location>
        <begin position="1"/>
        <end position="504"/>
    </location>
</feature>
<feature type="region of interest" description="Disordered" evidence="2">
    <location>
        <begin position="1"/>
        <end position="21"/>
    </location>
</feature>
<feature type="compositionally biased region" description="Polar residues" evidence="2">
    <location>
        <begin position="1"/>
        <end position="16"/>
    </location>
</feature>
<dbReference type="EC" id="4.1.1.31" evidence="1"/>
<dbReference type="EMBL" id="CP000414">
    <property type="protein sequence ID" value="ABJ62785.1"/>
    <property type="molecule type" value="Genomic_DNA"/>
</dbReference>
<dbReference type="RefSeq" id="WP_011680311.1">
    <property type="nucleotide sequence ID" value="NC_008531.1"/>
</dbReference>
<dbReference type="SMR" id="Q03VI7"/>
<dbReference type="EnsemblBacteria" id="ABJ62785">
    <property type="protein sequence ID" value="ABJ62785"/>
    <property type="gene ID" value="LEUM_1694"/>
</dbReference>
<dbReference type="GeneID" id="29576882"/>
<dbReference type="KEGG" id="lme:LEUM_1694"/>
<dbReference type="eggNOG" id="COG1892">
    <property type="taxonomic scope" value="Bacteria"/>
</dbReference>
<dbReference type="HOGENOM" id="CLU_517433_0_0_9"/>
<dbReference type="Proteomes" id="UP000000362">
    <property type="component" value="Chromosome"/>
</dbReference>
<dbReference type="GO" id="GO:0000287">
    <property type="term" value="F:magnesium ion binding"/>
    <property type="evidence" value="ECO:0007669"/>
    <property type="project" value="UniProtKB-UniRule"/>
</dbReference>
<dbReference type="GO" id="GO:0008964">
    <property type="term" value="F:phosphoenolpyruvate carboxylase activity"/>
    <property type="evidence" value="ECO:0007669"/>
    <property type="project" value="UniProtKB-UniRule"/>
</dbReference>
<dbReference type="GO" id="GO:0015977">
    <property type="term" value="P:carbon fixation"/>
    <property type="evidence" value="ECO:0007669"/>
    <property type="project" value="UniProtKB-UniRule"/>
</dbReference>
<dbReference type="GO" id="GO:0006107">
    <property type="term" value="P:oxaloacetate metabolic process"/>
    <property type="evidence" value="ECO:0007669"/>
    <property type="project" value="UniProtKB-UniRule"/>
</dbReference>
<dbReference type="GO" id="GO:0006099">
    <property type="term" value="P:tricarboxylic acid cycle"/>
    <property type="evidence" value="ECO:0007669"/>
    <property type="project" value="InterPro"/>
</dbReference>
<dbReference type="HAMAP" id="MF_01904">
    <property type="entry name" value="PEPcase_type2"/>
    <property type="match status" value="1"/>
</dbReference>
<dbReference type="InterPro" id="IPR007566">
    <property type="entry name" value="PEP_COase_arc-type"/>
</dbReference>
<dbReference type="InterPro" id="IPR015813">
    <property type="entry name" value="Pyrv/PenolPyrv_kinase-like_dom"/>
</dbReference>
<dbReference type="NCBIfam" id="TIGR02751">
    <property type="entry name" value="PEPCase_arch"/>
    <property type="match status" value="1"/>
</dbReference>
<dbReference type="Pfam" id="PF14010">
    <property type="entry name" value="PEPcase_2"/>
    <property type="match status" value="1"/>
</dbReference>
<dbReference type="PIRSF" id="PIRSF006677">
    <property type="entry name" value="UCP006677"/>
    <property type="match status" value="1"/>
</dbReference>
<dbReference type="SUPFAM" id="SSF51621">
    <property type="entry name" value="Phosphoenolpyruvate/pyruvate domain"/>
    <property type="match status" value="1"/>
</dbReference>
<organism>
    <name type="scientific">Leuconostoc mesenteroides subsp. mesenteroides (strain ATCC 8293 / DSM 20343 / BCRC 11652 / CCM 1803 / JCM 6124 / NCDO 523 / NBRC 100496 / NCIMB 8023 / NCTC 12954 / NRRL B-1118 / 37Y)</name>
    <dbReference type="NCBI Taxonomy" id="203120"/>
    <lineage>
        <taxon>Bacteria</taxon>
        <taxon>Bacillati</taxon>
        <taxon>Bacillota</taxon>
        <taxon>Bacilli</taxon>
        <taxon>Lactobacillales</taxon>
        <taxon>Lactobacillaceae</taxon>
        <taxon>Leuconostoc</taxon>
    </lineage>
</organism>
<sequence>MTSRKIPSIMGTQHPDNANAPFWESSQQPFISAYRETGEAFENFNELNVDEYMWDWEGKHADAAVIDRLFSTEYDYFKDHQIGRDKFLTFRFPNIWEEKGYNLMQAMTAFLSSEDFAHDLGFSRPLFEAILPMAQRADQILKMQVLFEKLANFKSAEFTRSDKNTPYIEMIPLFEDFETQLHAPEILKEYLNLHEEHFGFRPKYMRVFLAGSDSALTAGFMSSITGNKLAIARLHEFAEEENIEIFPISGTGSAIFRGGLSPHRIDRYVTEFPGVRTATVQSAFRYDFPIEEVQKGIAELKEKLPVAEPLKISLDDQKILTEIAEESAKFYSNTLDNLVPSMQAIFKAFPKRRDRRQHVGVLGYSRSVDGIELPRAINFTGSFYSVGVPPEFIGFGRALKHLDADHLSVFVRSYPSMSKDFNELARFVNMDALQILKTQNSAWAEVEEDILIMQRIFKFEIGPQTREEQQHAEIALQVVQFKDGAPVAITALINRMAQLRHFLG</sequence>
<proteinExistence type="inferred from homology"/>